<gene>
    <name evidence="1" type="primary">pqqA</name>
    <name type="ordered locus">PFLU_5598</name>
</gene>
<evidence type="ECO:0000255" key="1">
    <source>
        <dbReference type="HAMAP-Rule" id="MF_00656"/>
    </source>
</evidence>
<comment type="function">
    <text evidence="1">Required for coenzyme pyrroloquinoline quinone (PQQ) biosynthesis. PQQ is probably formed by cross-linking a specific glutamate to a specific tyrosine residue and excising these residues from the peptide.</text>
</comment>
<comment type="pathway">
    <text evidence="1">Cofactor biosynthesis; pyrroloquinoline quinone biosynthesis.</text>
</comment>
<comment type="similarity">
    <text evidence="1">Belongs to the PqqA family.</text>
</comment>
<proteinExistence type="inferred from homology"/>
<reference key="1">
    <citation type="journal article" date="2009" name="Genome Biol.">
        <title>Genomic and genetic analyses of diversity and plant interactions of Pseudomonas fluorescens.</title>
        <authorList>
            <person name="Silby M.W."/>
            <person name="Cerdeno-Tarraga A.M."/>
            <person name="Vernikos G.S."/>
            <person name="Giddens S.R."/>
            <person name="Jackson R.W."/>
            <person name="Preston G.M."/>
            <person name="Zhang X.-X."/>
            <person name="Moon C.D."/>
            <person name="Gehrig S.M."/>
            <person name="Godfrey S.A.C."/>
            <person name="Knight C.G."/>
            <person name="Malone J.G."/>
            <person name="Robinson Z."/>
            <person name="Spiers A.J."/>
            <person name="Harris S."/>
            <person name="Challis G.L."/>
            <person name="Yaxley A.M."/>
            <person name="Harris D."/>
            <person name="Seeger K."/>
            <person name="Murphy L."/>
            <person name="Rutter S."/>
            <person name="Squares R."/>
            <person name="Quail M.A."/>
            <person name="Saunders E."/>
            <person name="Mavromatis K."/>
            <person name="Brettin T.S."/>
            <person name="Bentley S.D."/>
            <person name="Hothersall J."/>
            <person name="Stephens E."/>
            <person name="Thomas C.M."/>
            <person name="Parkhill J."/>
            <person name="Levy S.B."/>
            <person name="Rainey P.B."/>
            <person name="Thomson N.R."/>
        </authorList>
    </citation>
    <scope>NUCLEOTIDE SEQUENCE [LARGE SCALE GENOMIC DNA]</scope>
    <source>
        <strain>SBW25</strain>
    </source>
</reference>
<dbReference type="EMBL" id="AM181176">
    <property type="protein sequence ID" value="CAY52882.1"/>
    <property type="molecule type" value="Genomic_DNA"/>
</dbReference>
<dbReference type="RefSeq" id="WP_003194766.1">
    <property type="nucleotide sequence ID" value="NC_012660.1"/>
</dbReference>
<dbReference type="GeneID" id="97919364"/>
<dbReference type="HOGENOM" id="CLU_219131_0_0_6"/>
<dbReference type="UniPathway" id="UPA00539"/>
<dbReference type="GO" id="GO:0018189">
    <property type="term" value="P:pyrroloquinoline quinone biosynthetic process"/>
    <property type="evidence" value="ECO:0007669"/>
    <property type="project" value="UniProtKB-UniRule"/>
</dbReference>
<dbReference type="HAMAP" id="MF_00656">
    <property type="entry name" value="PQQ_syn_PqqA"/>
    <property type="match status" value="1"/>
</dbReference>
<dbReference type="InterPro" id="IPR011725">
    <property type="entry name" value="PQQ_synth_PqqA"/>
</dbReference>
<dbReference type="NCBIfam" id="TIGR02107">
    <property type="entry name" value="PQQ_syn_pqqA"/>
    <property type="match status" value="1"/>
</dbReference>
<dbReference type="Pfam" id="PF08042">
    <property type="entry name" value="PqqA"/>
    <property type="match status" value="1"/>
</dbReference>
<sequence>MTWSKPAYTDLRIGFEVTMYFASR</sequence>
<organism>
    <name type="scientific">Pseudomonas fluorescens (strain SBW25)</name>
    <dbReference type="NCBI Taxonomy" id="216595"/>
    <lineage>
        <taxon>Bacteria</taxon>
        <taxon>Pseudomonadati</taxon>
        <taxon>Pseudomonadota</taxon>
        <taxon>Gammaproteobacteria</taxon>
        <taxon>Pseudomonadales</taxon>
        <taxon>Pseudomonadaceae</taxon>
        <taxon>Pseudomonas</taxon>
    </lineage>
</organism>
<protein>
    <recommendedName>
        <fullName evidence="1">Coenzyme PQQ synthesis protein A</fullName>
    </recommendedName>
    <alternativeName>
        <fullName evidence="1">Pyrroloquinoline quinone biosynthesis protein A</fullName>
    </alternativeName>
</protein>
<accession>C3K347</accession>
<feature type="chain" id="PRO_1000212440" description="Coenzyme PQQ synthesis protein A">
    <location>
        <begin position="1"/>
        <end position="24"/>
    </location>
</feature>
<feature type="cross-link" description="Pyrroloquinoline quinone (Glu-Tyr)" evidence="1">
    <location>
        <begin position="16"/>
        <end position="20"/>
    </location>
</feature>
<keyword id="KW-0884">PQQ biosynthesis</keyword>
<name>PQQA_PSEFS</name>